<feature type="chain" id="PRO_0000206778" description="Synaptobrevin homolog ykt6">
    <location>
        <begin position="1"/>
        <end position="194"/>
    </location>
</feature>
<feature type="propeptide" id="PRO_0000396673" description="Removed in mature form" evidence="1">
    <location>
        <begin position="195"/>
        <end position="197"/>
    </location>
</feature>
<feature type="domain" description="Longin" evidence="2">
    <location>
        <begin position="7"/>
        <end position="126"/>
    </location>
</feature>
<feature type="domain" description="v-SNARE coiled-coil homology" evidence="3">
    <location>
        <begin position="137"/>
        <end position="197"/>
    </location>
</feature>
<feature type="modified residue" description="Cysteine methyl ester" evidence="1">
    <location>
        <position position="194"/>
    </location>
</feature>
<feature type="lipid moiety-binding region" description="S-palmitoyl cysteine" evidence="1">
    <location>
        <position position="193"/>
    </location>
</feature>
<feature type="lipid moiety-binding region" description="S-farnesyl cysteine" evidence="1">
    <location>
        <position position="194"/>
    </location>
</feature>
<sequence length="197" mass="22652">MKLYSVSILRFDPKPVQLLCTASDLSSFSFFQRSSIGEFMNFFTKTVAERTNPGQRQDVEQSNYVFHVYNRSDGLCGVIASDKEYPLRVAYTLLNKILDEFLTKNPRTKWESGAVTLSFPELDTYLSKYQDPKQADTIMRVQQELDETKDVLHKTIESVLARGEKLDDLIQRSDNLSTQSRMFYKSAKKQNSCCIIA</sequence>
<dbReference type="EMBL" id="CU329671">
    <property type="protein sequence ID" value="CAA18664.1"/>
    <property type="molecule type" value="Genomic_DNA"/>
</dbReference>
<dbReference type="PIR" id="T39412">
    <property type="entry name" value="T39412"/>
</dbReference>
<dbReference type="RefSeq" id="NP_596561.1">
    <property type="nucleotide sequence ID" value="NM_001022482.2"/>
</dbReference>
<dbReference type="SMR" id="O60073"/>
<dbReference type="BioGRID" id="276419">
    <property type="interactions" value="3"/>
</dbReference>
<dbReference type="FunCoup" id="O60073">
    <property type="interactions" value="860"/>
</dbReference>
<dbReference type="STRING" id="284812.O60073"/>
<dbReference type="iPTMnet" id="O60073"/>
<dbReference type="PaxDb" id="4896-SPBC13G1.11.1"/>
<dbReference type="EnsemblFungi" id="SPBC13G1.11.1">
    <property type="protein sequence ID" value="SPBC13G1.11.1:pep"/>
    <property type="gene ID" value="SPBC13G1.11"/>
</dbReference>
<dbReference type="GeneID" id="2539873"/>
<dbReference type="KEGG" id="spo:2539873"/>
<dbReference type="PomBase" id="SPBC13G1.11">
    <property type="gene designation" value="ykt6"/>
</dbReference>
<dbReference type="VEuPathDB" id="FungiDB:SPBC13G1.11"/>
<dbReference type="eggNOG" id="KOG0861">
    <property type="taxonomic scope" value="Eukaryota"/>
</dbReference>
<dbReference type="HOGENOM" id="CLU_074848_0_1_1"/>
<dbReference type="InParanoid" id="O60073"/>
<dbReference type="OMA" id="HYIGIIR"/>
<dbReference type="PhylomeDB" id="O60073"/>
<dbReference type="Reactome" id="R-SPO-204005">
    <property type="pathway name" value="COPII-mediated vesicle transport"/>
</dbReference>
<dbReference type="Reactome" id="R-SPO-6807878">
    <property type="pathway name" value="COPI-mediated anterograde transport"/>
</dbReference>
<dbReference type="Reactome" id="R-SPO-6811438">
    <property type="pathway name" value="Intra-Golgi traffic"/>
</dbReference>
<dbReference type="PRO" id="PR:O60073"/>
<dbReference type="Proteomes" id="UP000002485">
    <property type="component" value="Chromosome II"/>
</dbReference>
<dbReference type="GO" id="GO:0012505">
    <property type="term" value="C:endomembrane system"/>
    <property type="evidence" value="ECO:0000314"/>
    <property type="project" value="PomBase"/>
</dbReference>
<dbReference type="GO" id="GO:0005794">
    <property type="term" value="C:Golgi apparatus"/>
    <property type="evidence" value="ECO:0000318"/>
    <property type="project" value="GO_Central"/>
</dbReference>
<dbReference type="GO" id="GO:0005886">
    <property type="term" value="C:plasma membrane"/>
    <property type="evidence" value="ECO:0007669"/>
    <property type="project" value="UniProtKB-SubCell"/>
</dbReference>
<dbReference type="GO" id="GO:0005484">
    <property type="term" value="F:SNAP receptor activity"/>
    <property type="evidence" value="ECO:0000318"/>
    <property type="project" value="GO_Central"/>
</dbReference>
<dbReference type="GO" id="GO:0006888">
    <property type="term" value="P:endoplasmic reticulum to Golgi vesicle-mediated transport"/>
    <property type="evidence" value="ECO:0000318"/>
    <property type="project" value="GO_Central"/>
</dbReference>
<dbReference type="GO" id="GO:0006886">
    <property type="term" value="P:intracellular protein transport"/>
    <property type="evidence" value="ECO:0000303"/>
    <property type="project" value="PomBase"/>
</dbReference>
<dbReference type="CDD" id="cd14824">
    <property type="entry name" value="Longin"/>
    <property type="match status" value="1"/>
</dbReference>
<dbReference type="CDD" id="cd15867">
    <property type="entry name" value="R-SNARE_YKT6"/>
    <property type="match status" value="1"/>
</dbReference>
<dbReference type="FunFam" id="1.20.5.110:FF:000020">
    <property type="entry name" value="synaptobrevin homolog YKT6"/>
    <property type="match status" value="1"/>
</dbReference>
<dbReference type="Gene3D" id="1.20.5.110">
    <property type="match status" value="1"/>
</dbReference>
<dbReference type="Gene3D" id="3.30.450.50">
    <property type="entry name" value="Longin domain"/>
    <property type="match status" value="1"/>
</dbReference>
<dbReference type="InterPro" id="IPR011012">
    <property type="entry name" value="Longin-like_dom_sf"/>
</dbReference>
<dbReference type="InterPro" id="IPR010908">
    <property type="entry name" value="Longin_dom"/>
</dbReference>
<dbReference type="InterPro" id="IPR045848">
    <property type="entry name" value="R-SNARE_YKT6"/>
</dbReference>
<dbReference type="InterPro" id="IPR001388">
    <property type="entry name" value="Synaptobrevin-like"/>
</dbReference>
<dbReference type="InterPro" id="IPR042855">
    <property type="entry name" value="V_SNARE_CC"/>
</dbReference>
<dbReference type="PANTHER" id="PTHR45806">
    <property type="entry name" value="SYNAPTOBREVIN HOMOLOG YKT6"/>
    <property type="match status" value="1"/>
</dbReference>
<dbReference type="PANTHER" id="PTHR45806:SF1">
    <property type="entry name" value="SYNAPTOBREVIN HOMOLOG YKT6"/>
    <property type="match status" value="1"/>
</dbReference>
<dbReference type="Pfam" id="PF13774">
    <property type="entry name" value="Longin"/>
    <property type="match status" value="1"/>
</dbReference>
<dbReference type="Pfam" id="PF00957">
    <property type="entry name" value="Synaptobrevin"/>
    <property type="match status" value="1"/>
</dbReference>
<dbReference type="PRINTS" id="PR00219">
    <property type="entry name" value="SYNAPTOBREVN"/>
</dbReference>
<dbReference type="SMART" id="SM01270">
    <property type="entry name" value="Longin"/>
    <property type="match status" value="1"/>
</dbReference>
<dbReference type="SUPFAM" id="SSF58038">
    <property type="entry name" value="SNARE fusion complex"/>
    <property type="match status" value="1"/>
</dbReference>
<dbReference type="SUPFAM" id="SSF64356">
    <property type="entry name" value="SNARE-like"/>
    <property type="match status" value="1"/>
</dbReference>
<dbReference type="PROSITE" id="PS50859">
    <property type="entry name" value="LONGIN"/>
    <property type="match status" value="1"/>
</dbReference>
<dbReference type="PROSITE" id="PS00417">
    <property type="entry name" value="SYNAPTOBREVIN"/>
    <property type="match status" value="1"/>
</dbReference>
<dbReference type="PROSITE" id="PS50892">
    <property type="entry name" value="V_SNARE"/>
    <property type="match status" value="1"/>
</dbReference>
<gene>
    <name type="primary">ykt6</name>
    <name type="ORF">SPBC13G1.11</name>
</gene>
<keyword id="KW-1003">Cell membrane</keyword>
<keyword id="KW-0175">Coiled coil</keyword>
<keyword id="KW-0449">Lipoprotein</keyword>
<keyword id="KW-0472">Membrane</keyword>
<keyword id="KW-0488">Methylation</keyword>
<keyword id="KW-0564">Palmitate</keyword>
<keyword id="KW-0636">Prenylation</keyword>
<keyword id="KW-1185">Reference proteome</keyword>
<accession>O60073</accession>
<comment type="subcellular location">
    <subcellularLocation>
        <location evidence="4">Cell membrane</location>
        <topology evidence="4">Lipid-anchor</topology>
        <orientation evidence="4">Cytoplasmic side</orientation>
    </subcellularLocation>
</comment>
<comment type="similarity">
    <text evidence="4">Belongs to the synaptobrevin family.</text>
</comment>
<organism>
    <name type="scientific">Schizosaccharomyces pombe (strain 972 / ATCC 24843)</name>
    <name type="common">Fission yeast</name>
    <dbReference type="NCBI Taxonomy" id="284812"/>
    <lineage>
        <taxon>Eukaryota</taxon>
        <taxon>Fungi</taxon>
        <taxon>Dikarya</taxon>
        <taxon>Ascomycota</taxon>
        <taxon>Taphrinomycotina</taxon>
        <taxon>Schizosaccharomycetes</taxon>
        <taxon>Schizosaccharomycetales</taxon>
        <taxon>Schizosaccharomycetaceae</taxon>
        <taxon>Schizosaccharomyces</taxon>
    </lineage>
</organism>
<proteinExistence type="inferred from homology"/>
<protein>
    <recommendedName>
        <fullName>Synaptobrevin homolog ykt6</fullName>
    </recommendedName>
</protein>
<name>YKT6_SCHPO</name>
<evidence type="ECO:0000250" key="1"/>
<evidence type="ECO:0000255" key="2">
    <source>
        <dbReference type="PROSITE-ProRule" id="PRU00231"/>
    </source>
</evidence>
<evidence type="ECO:0000255" key="3">
    <source>
        <dbReference type="PROSITE-ProRule" id="PRU00290"/>
    </source>
</evidence>
<evidence type="ECO:0000305" key="4"/>
<reference key="1">
    <citation type="journal article" date="2002" name="Nature">
        <title>The genome sequence of Schizosaccharomyces pombe.</title>
        <authorList>
            <person name="Wood V."/>
            <person name="Gwilliam R."/>
            <person name="Rajandream M.A."/>
            <person name="Lyne M.H."/>
            <person name="Lyne R."/>
            <person name="Stewart A."/>
            <person name="Sgouros J.G."/>
            <person name="Peat N."/>
            <person name="Hayles J."/>
            <person name="Baker S.G."/>
            <person name="Basham D."/>
            <person name="Bowman S."/>
            <person name="Brooks K."/>
            <person name="Brown D."/>
            <person name="Brown S."/>
            <person name="Chillingworth T."/>
            <person name="Churcher C.M."/>
            <person name="Collins M."/>
            <person name="Connor R."/>
            <person name="Cronin A."/>
            <person name="Davis P."/>
            <person name="Feltwell T."/>
            <person name="Fraser A."/>
            <person name="Gentles S."/>
            <person name="Goble A."/>
            <person name="Hamlin N."/>
            <person name="Harris D.E."/>
            <person name="Hidalgo J."/>
            <person name="Hodgson G."/>
            <person name="Holroyd S."/>
            <person name="Hornsby T."/>
            <person name="Howarth S."/>
            <person name="Huckle E.J."/>
            <person name="Hunt S."/>
            <person name="Jagels K."/>
            <person name="James K.D."/>
            <person name="Jones L."/>
            <person name="Jones M."/>
            <person name="Leather S."/>
            <person name="McDonald S."/>
            <person name="McLean J."/>
            <person name="Mooney P."/>
            <person name="Moule S."/>
            <person name="Mungall K.L."/>
            <person name="Murphy L.D."/>
            <person name="Niblett D."/>
            <person name="Odell C."/>
            <person name="Oliver K."/>
            <person name="O'Neil S."/>
            <person name="Pearson D."/>
            <person name="Quail M.A."/>
            <person name="Rabbinowitsch E."/>
            <person name="Rutherford K.M."/>
            <person name="Rutter S."/>
            <person name="Saunders D."/>
            <person name="Seeger K."/>
            <person name="Sharp S."/>
            <person name="Skelton J."/>
            <person name="Simmonds M.N."/>
            <person name="Squares R."/>
            <person name="Squares S."/>
            <person name="Stevens K."/>
            <person name="Taylor K."/>
            <person name="Taylor R.G."/>
            <person name="Tivey A."/>
            <person name="Walsh S.V."/>
            <person name="Warren T."/>
            <person name="Whitehead S."/>
            <person name="Woodward J.R."/>
            <person name="Volckaert G."/>
            <person name="Aert R."/>
            <person name="Robben J."/>
            <person name="Grymonprez B."/>
            <person name="Weltjens I."/>
            <person name="Vanstreels E."/>
            <person name="Rieger M."/>
            <person name="Schaefer M."/>
            <person name="Mueller-Auer S."/>
            <person name="Gabel C."/>
            <person name="Fuchs M."/>
            <person name="Duesterhoeft A."/>
            <person name="Fritzc C."/>
            <person name="Holzer E."/>
            <person name="Moestl D."/>
            <person name="Hilbert H."/>
            <person name="Borzym K."/>
            <person name="Langer I."/>
            <person name="Beck A."/>
            <person name="Lehrach H."/>
            <person name="Reinhardt R."/>
            <person name="Pohl T.M."/>
            <person name="Eger P."/>
            <person name="Zimmermann W."/>
            <person name="Wedler H."/>
            <person name="Wambutt R."/>
            <person name="Purnelle B."/>
            <person name="Goffeau A."/>
            <person name="Cadieu E."/>
            <person name="Dreano S."/>
            <person name="Gloux S."/>
            <person name="Lelaure V."/>
            <person name="Mottier S."/>
            <person name="Galibert F."/>
            <person name="Aves S.J."/>
            <person name="Xiang Z."/>
            <person name="Hunt C."/>
            <person name="Moore K."/>
            <person name="Hurst S.M."/>
            <person name="Lucas M."/>
            <person name="Rochet M."/>
            <person name="Gaillardin C."/>
            <person name="Tallada V.A."/>
            <person name="Garzon A."/>
            <person name="Thode G."/>
            <person name="Daga R.R."/>
            <person name="Cruzado L."/>
            <person name="Jimenez J."/>
            <person name="Sanchez M."/>
            <person name="del Rey F."/>
            <person name="Benito J."/>
            <person name="Dominguez A."/>
            <person name="Revuelta J.L."/>
            <person name="Moreno S."/>
            <person name="Armstrong J."/>
            <person name="Forsburg S.L."/>
            <person name="Cerutti L."/>
            <person name="Lowe T."/>
            <person name="McCombie W.R."/>
            <person name="Paulsen I."/>
            <person name="Potashkin J."/>
            <person name="Shpakovski G.V."/>
            <person name="Ussery D."/>
            <person name="Barrell B.G."/>
            <person name="Nurse P."/>
        </authorList>
    </citation>
    <scope>NUCLEOTIDE SEQUENCE [LARGE SCALE GENOMIC DNA]</scope>
    <source>
        <strain>972 / ATCC 24843</strain>
    </source>
</reference>